<evidence type="ECO:0000250" key="1"/>
<evidence type="ECO:0000255" key="2"/>
<evidence type="ECO:0000255" key="3">
    <source>
        <dbReference type="PROSITE-ProRule" id="PRU00295"/>
    </source>
</evidence>
<evidence type="ECO:0000255" key="4">
    <source>
        <dbReference type="PROSITE-ProRule" id="PRU00460"/>
    </source>
</evidence>
<evidence type="ECO:0000255" key="5">
    <source>
        <dbReference type="PROSITE-ProRule" id="PRU00466"/>
    </source>
</evidence>
<evidence type="ECO:0000305" key="6"/>
<name>NET4_PONAB</name>
<sequence>MGSCARLLLLWGCTVVAAGLSGVAGVSSRCEKACNPRMGNLALGRKLWADTTCGQNATELYCFYSENTDLTCRQPKCDKCNAAHPHLAHLPSAMADSSFRFPRTWWQSAEDVHREKIQLDLEAEFYFTHLIMMFKSPRPAAMVLDRSQDFGKTWKPYKYFATNCSATFGLEDDVVKKGAICTSKYSSPFPCTGGEVIFKALSPPYDTENPYSAKVQEQLKITNLRVQLLKRQSCPCQRNDLNDEPQHFTHYAIYDFIVKGSCFCNGHADQCIPVHGFRPVKAPGTFHMVHGKCMCKHNTAGSHCQHCAPLYNDQPWEAADGKTGAPNECRTCKCNGHADTCHFDVNVWEASGNRSGGVCDDCQHNTEGQHCQRCKPGFYRDLRRPFSAPDACKPCSCHPVGSAVLPANSVTFCDPSNGDCPCKPGVAGRHCDRCMVGYWGFGDYGCRPCDCAGSCDPITGDCISSHTDIDWHHEFPDFRPVHNKSEAAWEWEDAQGFSALLHSGKCECKEQTLGNAKAFCGMKYSYVLKIKILSAHDKGTHVEVNVKIKKVLKSTKLKIFRGKRTLYPESWTDRGCTCPILNPGLEYLVAGHEDVRTGKLIVNMKSFVQHWKPSLGRKVMDILKRECK</sequence>
<reference key="1">
    <citation type="submission" date="2004-11" db="EMBL/GenBank/DDBJ databases">
        <authorList>
            <consortium name="The German cDNA consortium"/>
        </authorList>
    </citation>
    <scope>NUCLEOTIDE SEQUENCE [LARGE SCALE MRNA]</scope>
    <source>
        <tissue>Heart</tissue>
    </source>
</reference>
<keyword id="KW-1015">Disulfide bond</keyword>
<keyword id="KW-0272">Extracellular matrix</keyword>
<keyword id="KW-0325">Glycoprotein</keyword>
<keyword id="KW-0424">Laminin EGF-like domain</keyword>
<keyword id="KW-1185">Reference proteome</keyword>
<keyword id="KW-0677">Repeat</keyword>
<keyword id="KW-0964">Secreted</keyword>
<keyword id="KW-0732">Signal</keyword>
<accession>Q5RB89</accession>
<accession>Q5R9V5</accession>
<proteinExistence type="evidence at transcript level"/>
<protein>
    <recommendedName>
        <fullName>Netrin-4</fullName>
    </recommendedName>
</protein>
<gene>
    <name type="primary">NTN4</name>
</gene>
<feature type="signal peptide" evidence="2">
    <location>
        <begin position="1"/>
        <end position="18"/>
    </location>
</feature>
<feature type="chain" id="PRO_0000042118" description="Netrin-4">
    <location>
        <begin position="19"/>
        <end position="628"/>
    </location>
</feature>
<feature type="domain" description="Laminin N-terminal" evidence="5">
    <location>
        <begin position="30"/>
        <end position="261"/>
    </location>
</feature>
<feature type="domain" description="Laminin EGF-like 1" evidence="4">
    <location>
        <begin position="262"/>
        <end position="331"/>
    </location>
</feature>
<feature type="domain" description="Laminin EGF-like 2" evidence="4">
    <location>
        <begin position="332"/>
        <end position="394"/>
    </location>
</feature>
<feature type="domain" description="Laminin EGF-like 3" evidence="4">
    <location>
        <begin position="395"/>
        <end position="448"/>
    </location>
</feature>
<feature type="domain" description="NTR" evidence="3">
    <location>
        <begin position="506"/>
        <end position="627"/>
    </location>
</feature>
<feature type="glycosylation site" description="N-linked (GlcNAc...) asparagine" evidence="2">
    <location>
        <position position="56"/>
    </location>
</feature>
<feature type="glycosylation site" description="N-linked (GlcNAc...) asparagine" evidence="2">
    <location>
        <position position="163"/>
    </location>
</feature>
<feature type="glycosylation site" description="N-linked (GlcNAc...) asparagine" evidence="2">
    <location>
        <position position="353"/>
    </location>
</feature>
<feature type="glycosylation site" description="N-linked (GlcNAc...) asparagine" evidence="2">
    <location>
        <position position="483"/>
    </location>
</feature>
<feature type="disulfide bond" evidence="1">
    <location>
        <begin position="262"/>
        <end position="271"/>
    </location>
</feature>
<feature type="disulfide bond" evidence="1">
    <location>
        <begin position="264"/>
        <end position="293"/>
    </location>
</feature>
<feature type="disulfide bond" evidence="1">
    <location>
        <begin position="295"/>
        <end position="304"/>
    </location>
</feature>
<feature type="disulfide bond" evidence="1">
    <location>
        <begin position="307"/>
        <end position="329"/>
    </location>
</feature>
<feature type="disulfide bond" evidence="1">
    <location>
        <begin position="332"/>
        <end position="341"/>
    </location>
</feature>
<feature type="disulfide bond" evidence="1">
    <location>
        <begin position="334"/>
        <end position="359"/>
    </location>
</feature>
<feature type="disulfide bond" evidence="1">
    <location>
        <begin position="362"/>
        <end position="371"/>
    </location>
</feature>
<feature type="disulfide bond" evidence="1">
    <location>
        <begin position="374"/>
        <end position="392"/>
    </location>
</feature>
<feature type="disulfide bond" evidence="1">
    <location>
        <begin position="395"/>
        <end position="413"/>
    </location>
</feature>
<feature type="disulfide bond" evidence="1">
    <location>
        <begin position="397"/>
        <end position="420"/>
    </location>
</feature>
<feature type="disulfide bond" evidence="1">
    <location>
        <begin position="422"/>
        <end position="431"/>
    </location>
</feature>
<feature type="disulfide bond" evidence="1">
    <location>
        <begin position="434"/>
        <end position="446"/>
    </location>
</feature>
<feature type="disulfide bond" evidence="1">
    <location>
        <begin position="506"/>
        <end position="576"/>
    </location>
</feature>
<feature type="disulfide bond" evidence="1">
    <location>
        <begin position="520"/>
        <end position="627"/>
    </location>
</feature>
<feature type="sequence conflict" description="In Ref. 1; CAH91455." evidence="6" ref="1">
    <original>F</original>
    <variation>V</variation>
    <location>
        <position position="475"/>
    </location>
</feature>
<comment type="function">
    <text evidence="1">May play an important role in neural, kidney and vascular development.</text>
</comment>
<comment type="subunit">
    <text evidence="1">May form a homodimer.</text>
</comment>
<comment type="subcellular location">
    <subcellularLocation>
        <location evidence="1">Secreted</location>
        <location evidence="1">Extracellular space</location>
        <location evidence="1">Extracellular matrix</location>
    </subcellularLocation>
</comment>
<organism>
    <name type="scientific">Pongo abelii</name>
    <name type="common">Sumatran orangutan</name>
    <name type="synonym">Pongo pygmaeus abelii</name>
    <dbReference type="NCBI Taxonomy" id="9601"/>
    <lineage>
        <taxon>Eukaryota</taxon>
        <taxon>Metazoa</taxon>
        <taxon>Chordata</taxon>
        <taxon>Craniata</taxon>
        <taxon>Vertebrata</taxon>
        <taxon>Euteleostomi</taxon>
        <taxon>Mammalia</taxon>
        <taxon>Eutheria</taxon>
        <taxon>Euarchontoglires</taxon>
        <taxon>Primates</taxon>
        <taxon>Haplorrhini</taxon>
        <taxon>Catarrhini</taxon>
        <taxon>Hominidae</taxon>
        <taxon>Pongo</taxon>
    </lineage>
</organism>
<dbReference type="EMBL" id="CR858764">
    <property type="protein sequence ID" value="CAH90971.1"/>
    <property type="molecule type" value="mRNA"/>
</dbReference>
<dbReference type="EMBL" id="CR859277">
    <property type="protein sequence ID" value="CAH91455.1"/>
    <property type="molecule type" value="mRNA"/>
</dbReference>
<dbReference type="RefSeq" id="NP_001125560.1">
    <property type="nucleotide sequence ID" value="NM_001132088.1"/>
</dbReference>
<dbReference type="SMR" id="Q5RB89"/>
<dbReference type="FunCoup" id="Q5RB89">
    <property type="interactions" value="158"/>
</dbReference>
<dbReference type="STRING" id="9601.ENSPPYP00000005528"/>
<dbReference type="GlyCosmos" id="Q5RB89">
    <property type="glycosylation" value="4 sites, No reported glycans"/>
</dbReference>
<dbReference type="GeneID" id="100172474"/>
<dbReference type="KEGG" id="pon:100172474"/>
<dbReference type="CTD" id="59277"/>
<dbReference type="eggNOG" id="KOG0994">
    <property type="taxonomic scope" value="Eukaryota"/>
</dbReference>
<dbReference type="InParanoid" id="Q5RB89"/>
<dbReference type="OrthoDB" id="9855268at2759"/>
<dbReference type="Proteomes" id="UP000001595">
    <property type="component" value="Unplaced"/>
</dbReference>
<dbReference type="GO" id="GO:0005576">
    <property type="term" value="C:extracellular region"/>
    <property type="evidence" value="ECO:0007669"/>
    <property type="project" value="UniProtKB-KW"/>
</dbReference>
<dbReference type="GO" id="GO:0043256">
    <property type="term" value="C:laminin complex"/>
    <property type="evidence" value="ECO:0007669"/>
    <property type="project" value="TreeGrafter"/>
</dbReference>
<dbReference type="GO" id="GO:0009887">
    <property type="term" value="P:animal organ morphogenesis"/>
    <property type="evidence" value="ECO:0007669"/>
    <property type="project" value="TreeGrafter"/>
</dbReference>
<dbReference type="GO" id="GO:0007411">
    <property type="term" value="P:axon guidance"/>
    <property type="evidence" value="ECO:0007669"/>
    <property type="project" value="TreeGrafter"/>
</dbReference>
<dbReference type="GO" id="GO:0070831">
    <property type="term" value="P:basement membrane assembly"/>
    <property type="evidence" value="ECO:0007669"/>
    <property type="project" value="TreeGrafter"/>
</dbReference>
<dbReference type="GO" id="GO:0016477">
    <property type="term" value="P:cell migration"/>
    <property type="evidence" value="ECO:0007669"/>
    <property type="project" value="TreeGrafter"/>
</dbReference>
<dbReference type="GO" id="GO:0034446">
    <property type="term" value="P:substrate adhesion-dependent cell spreading"/>
    <property type="evidence" value="ECO:0007669"/>
    <property type="project" value="TreeGrafter"/>
</dbReference>
<dbReference type="GO" id="GO:0009888">
    <property type="term" value="P:tissue development"/>
    <property type="evidence" value="ECO:0007669"/>
    <property type="project" value="TreeGrafter"/>
</dbReference>
<dbReference type="CDD" id="cd00055">
    <property type="entry name" value="EGF_Lam"/>
    <property type="match status" value="3"/>
</dbReference>
<dbReference type="CDD" id="cd03578">
    <property type="entry name" value="NTR_netrin-4_like"/>
    <property type="match status" value="1"/>
</dbReference>
<dbReference type="FunFam" id="2.170.300.10:FF:000001">
    <property type="entry name" value="Laminin subunit beta-1"/>
    <property type="match status" value="1"/>
</dbReference>
<dbReference type="FunFam" id="2.10.25.10:FF:000200">
    <property type="entry name" value="netrin-4 isoform X1"/>
    <property type="match status" value="1"/>
</dbReference>
<dbReference type="FunFam" id="2.40.50.120:FF:000002">
    <property type="entry name" value="netrin-4 isoform X1"/>
    <property type="match status" value="1"/>
</dbReference>
<dbReference type="FunFam" id="2.60.120.260:FF:000048">
    <property type="entry name" value="netrin-4 isoform X1"/>
    <property type="match status" value="1"/>
</dbReference>
<dbReference type="FunFam" id="2.10.25.10:FF:000333">
    <property type="entry name" value="netrin-4 isoform X2"/>
    <property type="match status" value="1"/>
</dbReference>
<dbReference type="Gene3D" id="2.40.50.120">
    <property type="match status" value="1"/>
</dbReference>
<dbReference type="Gene3D" id="2.60.120.260">
    <property type="entry name" value="Galactose-binding domain-like"/>
    <property type="match status" value="1"/>
</dbReference>
<dbReference type="Gene3D" id="2.10.25.10">
    <property type="entry name" value="Laminin"/>
    <property type="match status" value="1"/>
</dbReference>
<dbReference type="Gene3D" id="2.170.300.10">
    <property type="entry name" value="Tie2 ligand-binding domain superfamily"/>
    <property type="match status" value="1"/>
</dbReference>
<dbReference type="InterPro" id="IPR050440">
    <property type="entry name" value="Laminin/Netrin_ECM"/>
</dbReference>
<dbReference type="InterPro" id="IPR008211">
    <property type="entry name" value="Laminin_N"/>
</dbReference>
<dbReference type="InterPro" id="IPR002049">
    <property type="entry name" value="LE_dom"/>
</dbReference>
<dbReference type="InterPro" id="IPR056863">
    <property type="entry name" value="LMN_ATRN_NET-like_EGF"/>
</dbReference>
<dbReference type="InterPro" id="IPR035811">
    <property type="entry name" value="Netrin-4_NTR"/>
</dbReference>
<dbReference type="InterPro" id="IPR001134">
    <property type="entry name" value="Netrin_domain"/>
</dbReference>
<dbReference type="InterPro" id="IPR018933">
    <property type="entry name" value="Netrin_module_non-TIMP"/>
</dbReference>
<dbReference type="InterPro" id="IPR008993">
    <property type="entry name" value="TIMP-like_OB-fold"/>
</dbReference>
<dbReference type="PANTHER" id="PTHR10574:SF282">
    <property type="entry name" value="NETRIN-4"/>
    <property type="match status" value="1"/>
</dbReference>
<dbReference type="PANTHER" id="PTHR10574">
    <property type="entry name" value="NETRIN/LAMININ-RELATED"/>
    <property type="match status" value="1"/>
</dbReference>
<dbReference type="Pfam" id="PF00053">
    <property type="entry name" value="EGF_laminin"/>
    <property type="match status" value="2"/>
</dbReference>
<dbReference type="Pfam" id="PF24973">
    <property type="entry name" value="EGF_LMN_ATRN"/>
    <property type="match status" value="1"/>
</dbReference>
<dbReference type="Pfam" id="PF00055">
    <property type="entry name" value="Laminin_N"/>
    <property type="match status" value="1"/>
</dbReference>
<dbReference type="Pfam" id="PF01759">
    <property type="entry name" value="NTR"/>
    <property type="match status" value="1"/>
</dbReference>
<dbReference type="PRINTS" id="PR00011">
    <property type="entry name" value="EGFLAMININ"/>
</dbReference>
<dbReference type="SMART" id="SM00643">
    <property type="entry name" value="C345C"/>
    <property type="match status" value="1"/>
</dbReference>
<dbReference type="SMART" id="SM00180">
    <property type="entry name" value="EGF_Lam"/>
    <property type="match status" value="3"/>
</dbReference>
<dbReference type="SMART" id="SM00136">
    <property type="entry name" value="LamNT"/>
    <property type="match status" value="1"/>
</dbReference>
<dbReference type="SUPFAM" id="SSF57196">
    <property type="entry name" value="EGF/Laminin"/>
    <property type="match status" value="3"/>
</dbReference>
<dbReference type="SUPFAM" id="SSF50242">
    <property type="entry name" value="TIMP-like"/>
    <property type="match status" value="1"/>
</dbReference>
<dbReference type="PROSITE" id="PS00022">
    <property type="entry name" value="EGF_1"/>
    <property type="match status" value="2"/>
</dbReference>
<dbReference type="PROSITE" id="PS01248">
    <property type="entry name" value="EGF_LAM_1"/>
    <property type="match status" value="2"/>
</dbReference>
<dbReference type="PROSITE" id="PS50027">
    <property type="entry name" value="EGF_LAM_2"/>
    <property type="match status" value="3"/>
</dbReference>
<dbReference type="PROSITE" id="PS51117">
    <property type="entry name" value="LAMININ_NTER"/>
    <property type="match status" value="1"/>
</dbReference>
<dbReference type="PROSITE" id="PS50189">
    <property type="entry name" value="NTR"/>
    <property type="match status" value="1"/>
</dbReference>